<name>DTD_STRT1</name>
<sequence length="147" mass="16076">MKIVIQRVQSASVAIEDSTVGTIKQGLLLLVGVGPEDTKEDLDYAVRKIINMRIFSDEDGKMNLSVKDIGGQILSISQFTLFADTKKGNRPAFTGAAKPDMASQFYDDFNQSLSSYVPVERGRFGADMQVSLVNDGPVTVILDTKNR</sequence>
<keyword id="KW-0963">Cytoplasm</keyword>
<keyword id="KW-0378">Hydrolase</keyword>
<keyword id="KW-0694">RNA-binding</keyword>
<keyword id="KW-0820">tRNA-binding</keyword>
<accession>Q5M1S1</accession>
<organism>
    <name type="scientific">Streptococcus thermophilus (strain CNRZ 1066)</name>
    <dbReference type="NCBI Taxonomy" id="299768"/>
    <lineage>
        <taxon>Bacteria</taxon>
        <taxon>Bacillati</taxon>
        <taxon>Bacillota</taxon>
        <taxon>Bacilli</taxon>
        <taxon>Lactobacillales</taxon>
        <taxon>Streptococcaceae</taxon>
        <taxon>Streptococcus</taxon>
    </lineage>
</organism>
<evidence type="ECO:0000255" key="1">
    <source>
        <dbReference type="HAMAP-Rule" id="MF_00518"/>
    </source>
</evidence>
<feature type="chain" id="PRO_0000164607" description="D-aminoacyl-tRNA deacylase">
    <location>
        <begin position="1"/>
        <end position="147"/>
    </location>
</feature>
<feature type="short sequence motif" description="Gly-cisPro motif, important for rejection of L-amino acids" evidence="1">
    <location>
        <begin position="136"/>
        <end position="137"/>
    </location>
</feature>
<dbReference type="EC" id="3.1.1.96" evidence="1"/>
<dbReference type="EMBL" id="CP000024">
    <property type="protein sequence ID" value="AAV61760.1"/>
    <property type="molecule type" value="Genomic_DNA"/>
</dbReference>
<dbReference type="RefSeq" id="WP_004197391.1">
    <property type="nucleotide sequence ID" value="NC_006449.1"/>
</dbReference>
<dbReference type="SMR" id="Q5M1S1"/>
<dbReference type="GeneID" id="66898090"/>
<dbReference type="KEGG" id="stc:str0146"/>
<dbReference type="HOGENOM" id="CLU_076901_1_0_9"/>
<dbReference type="GO" id="GO:0005737">
    <property type="term" value="C:cytoplasm"/>
    <property type="evidence" value="ECO:0007669"/>
    <property type="project" value="UniProtKB-SubCell"/>
</dbReference>
<dbReference type="GO" id="GO:0051500">
    <property type="term" value="F:D-tyrosyl-tRNA(Tyr) deacylase activity"/>
    <property type="evidence" value="ECO:0007669"/>
    <property type="project" value="TreeGrafter"/>
</dbReference>
<dbReference type="GO" id="GO:0106026">
    <property type="term" value="F:Gly-tRNA(Ala) deacylase activity"/>
    <property type="evidence" value="ECO:0007669"/>
    <property type="project" value="UniProtKB-UniRule"/>
</dbReference>
<dbReference type="GO" id="GO:0043908">
    <property type="term" value="F:Ser(Gly)-tRNA(Ala) hydrolase activity"/>
    <property type="evidence" value="ECO:0007669"/>
    <property type="project" value="UniProtKB-UniRule"/>
</dbReference>
<dbReference type="GO" id="GO:0000049">
    <property type="term" value="F:tRNA binding"/>
    <property type="evidence" value="ECO:0007669"/>
    <property type="project" value="UniProtKB-UniRule"/>
</dbReference>
<dbReference type="GO" id="GO:0019478">
    <property type="term" value="P:D-amino acid catabolic process"/>
    <property type="evidence" value="ECO:0007669"/>
    <property type="project" value="UniProtKB-UniRule"/>
</dbReference>
<dbReference type="CDD" id="cd00563">
    <property type="entry name" value="Dtyr_deacylase"/>
    <property type="match status" value="1"/>
</dbReference>
<dbReference type="FunFam" id="3.50.80.10:FF:000001">
    <property type="entry name" value="D-aminoacyl-tRNA deacylase"/>
    <property type="match status" value="1"/>
</dbReference>
<dbReference type="Gene3D" id="3.50.80.10">
    <property type="entry name" value="D-tyrosyl-tRNA(Tyr) deacylase"/>
    <property type="match status" value="1"/>
</dbReference>
<dbReference type="HAMAP" id="MF_00518">
    <property type="entry name" value="Deacylase_Dtd"/>
    <property type="match status" value="1"/>
</dbReference>
<dbReference type="InterPro" id="IPR003732">
    <property type="entry name" value="Daa-tRNA_deacyls_DTD"/>
</dbReference>
<dbReference type="InterPro" id="IPR023509">
    <property type="entry name" value="DTD-like_sf"/>
</dbReference>
<dbReference type="NCBIfam" id="TIGR00256">
    <property type="entry name" value="D-aminoacyl-tRNA deacylase"/>
    <property type="match status" value="1"/>
</dbReference>
<dbReference type="PANTHER" id="PTHR10472:SF5">
    <property type="entry name" value="D-AMINOACYL-TRNA DEACYLASE 1"/>
    <property type="match status" value="1"/>
</dbReference>
<dbReference type="PANTHER" id="PTHR10472">
    <property type="entry name" value="D-TYROSYL-TRNA TYR DEACYLASE"/>
    <property type="match status" value="1"/>
</dbReference>
<dbReference type="Pfam" id="PF02580">
    <property type="entry name" value="Tyr_Deacylase"/>
    <property type="match status" value="1"/>
</dbReference>
<dbReference type="SUPFAM" id="SSF69500">
    <property type="entry name" value="DTD-like"/>
    <property type="match status" value="1"/>
</dbReference>
<gene>
    <name evidence="1" type="primary">dtd</name>
    <name type="ordered locus">str0146</name>
</gene>
<reference key="1">
    <citation type="journal article" date="2004" name="Nat. Biotechnol.">
        <title>Complete sequence and comparative genome analysis of the dairy bacterium Streptococcus thermophilus.</title>
        <authorList>
            <person name="Bolotin A."/>
            <person name="Quinquis B."/>
            <person name="Renault P."/>
            <person name="Sorokin A."/>
            <person name="Ehrlich S.D."/>
            <person name="Kulakauskas S."/>
            <person name="Lapidus A."/>
            <person name="Goltsman E."/>
            <person name="Mazur M."/>
            <person name="Pusch G.D."/>
            <person name="Fonstein M."/>
            <person name="Overbeek R."/>
            <person name="Kyprides N."/>
            <person name="Purnelle B."/>
            <person name="Prozzi D."/>
            <person name="Ngui K."/>
            <person name="Masuy D."/>
            <person name="Hancy F."/>
            <person name="Burteau S."/>
            <person name="Boutry M."/>
            <person name="Delcour J."/>
            <person name="Goffeau A."/>
            <person name="Hols P."/>
        </authorList>
    </citation>
    <scope>NUCLEOTIDE SEQUENCE [LARGE SCALE GENOMIC DNA]</scope>
    <source>
        <strain>CNRZ 1066</strain>
    </source>
</reference>
<proteinExistence type="inferred from homology"/>
<comment type="function">
    <text evidence="1">An aminoacyl-tRNA editing enzyme that deacylates mischarged D-aminoacyl-tRNAs. Also deacylates mischarged glycyl-tRNA(Ala), protecting cells against glycine mischarging by AlaRS. Acts via tRNA-based rather than protein-based catalysis; rejects L-amino acids rather than detecting D-amino acids in the active site. By recycling D-aminoacyl-tRNA to D-amino acids and free tRNA molecules, this enzyme counteracts the toxicity associated with the formation of D-aminoacyl-tRNA entities in vivo and helps enforce protein L-homochirality.</text>
</comment>
<comment type="catalytic activity">
    <reaction evidence="1">
        <text>glycyl-tRNA(Ala) + H2O = tRNA(Ala) + glycine + H(+)</text>
        <dbReference type="Rhea" id="RHEA:53744"/>
        <dbReference type="Rhea" id="RHEA-COMP:9657"/>
        <dbReference type="Rhea" id="RHEA-COMP:13640"/>
        <dbReference type="ChEBI" id="CHEBI:15377"/>
        <dbReference type="ChEBI" id="CHEBI:15378"/>
        <dbReference type="ChEBI" id="CHEBI:57305"/>
        <dbReference type="ChEBI" id="CHEBI:78442"/>
        <dbReference type="ChEBI" id="CHEBI:78522"/>
        <dbReference type="EC" id="3.1.1.96"/>
    </reaction>
</comment>
<comment type="catalytic activity">
    <reaction evidence="1">
        <text>a D-aminoacyl-tRNA + H2O = a tRNA + a D-alpha-amino acid + H(+)</text>
        <dbReference type="Rhea" id="RHEA:13953"/>
        <dbReference type="Rhea" id="RHEA-COMP:10123"/>
        <dbReference type="Rhea" id="RHEA-COMP:10124"/>
        <dbReference type="ChEBI" id="CHEBI:15377"/>
        <dbReference type="ChEBI" id="CHEBI:15378"/>
        <dbReference type="ChEBI" id="CHEBI:59871"/>
        <dbReference type="ChEBI" id="CHEBI:78442"/>
        <dbReference type="ChEBI" id="CHEBI:79333"/>
        <dbReference type="EC" id="3.1.1.96"/>
    </reaction>
</comment>
<comment type="subunit">
    <text evidence="1">Homodimer.</text>
</comment>
<comment type="subcellular location">
    <subcellularLocation>
        <location evidence="1">Cytoplasm</location>
    </subcellularLocation>
</comment>
<comment type="domain">
    <text evidence="1">A Gly-cisPro motif from one monomer fits into the active site of the other monomer to allow specific chiral rejection of L-amino acids.</text>
</comment>
<comment type="similarity">
    <text evidence="1">Belongs to the DTD family.</text>
</comment>
<protein>
    <recommendedName>
        <fullName evidence="1">D-aminoacyl-tRNA deacylase</fullName>
        <shortName evidence="1">DTD</shortName>
        <ecNumber evidence="1">3.1.1.96</ecNumber>
    </recommendedName>
    <alternativeName>
        <fullName evidence="1">Gly-tRNA(Ala) deacylase</fullName>
    </alternativeName>
</protein>